<name>METE_CAMJE</name>
<protein>
    <recommendedName>
        <fullName evidence="1">5-methyltetrahydropteroyltriglutamate--homocysteine methyltransferase</fullName>
        <ecNumber evidence="1">2.1.1.14</ecNumber>
    </recommendedName>
    <alternativeName>
        <fullName evidence="1">Cobalamin-independent methionine synthase</fullName>
    </alternativeName>
    <alternativeName>
        <fullName evidence="1">Methionine synthase, vitamin-B12 independent isozyme</fullName>
    </alternativeName>
</protein>
<comment type="function">
    <text evidence="1">Catalyzes the transfer of a methyl group from 5-methyltetrahydrofolate to homocysteine resulting in methionine formation.</text>
</comment>
<comment type="catalytic activity">
    <reaction evidence="1">
        <text>5-methyltetrahydropteroyltri-L-glutamate + L-homocysteine = tetrahydropteroyltri-L-glutamate + L-methionine</text>
        <dbReference type="Rhea" id="RHEA:21196"/>
        <dbReference type="ChEBI" id="CHEBI:57844"/>
        <dbReference type="ChEBI" id="CHEBI:58140"/>
        <dbReference type="ChEBI" id="CHEBI:58199"/>
        <dbReference type="ChEBI" id="CHEBI:58207"/>
        <dbReference type="EC" id="2.1.1.14"/>
    </reaction>
</comment>
<comment type="cofactor">
    <cofactor evidence="1">
        <name>Zn(2+)</name>
        <dbReference type="ChEBI" id="CHEBI:29105"/>
    </cofactor>
    <text evidence="1">Binds 1 zinc ion per subunit.</text>
</comment>
<comment type="pathway">
    <text evidence="1">Amino-acid biosynthesis; L-methionine biosynthesis via de novo pathway; L-methionine from L-homocysteine (MetE route): step 1/1.</text>
</comment>
<comment type="similarity">
    <text evidence="1 2">Belongs to the vitamin-B12 independent methionine synthase family.</text>
</comment>
<feature type="chain" id="PRO_0000098622" description="5-methyltetrahydropteroyltriglutamate--homocysteine methyltransferase">
    <location>
        <begin position="1"/>
        <end position="754"/>
    </location>
</feature>
<feature type="active site" description="Proton donor" evidence="1">
    <location>
        <position position="694"/>
    </location>
</feature>
<feature type="binding site" evidence="1">
    <location>
        <begin position="15"/>
        <end position="18"/>
    </location>
    <ligand>
        <name>5-methyltetrahydropteroyltri-L-glutamate</name>
        <dbReference type="ChEBI" id="CHEBI:58207"/>
    </ligand>
</feature>
<feature type="binding site" evidence="1">
    <location>
        <position position="114"/>
    </location>
    <ligand>
        <name>5-methyltetrahydropteroyltri-L-glutamate</name>
        <dbReference type="ChEBI" id="CHEBI:58207"/>
    </ligand>
</feature>
<feature type="binding site" evidence="1">
    <location>
        <begin position="430"/>
        <end position="432"/>
    </location>
    <ligand>
        <name>L-homocysteine</name>
        <dbReference type="ChEBI" id="CHEBI:58199"/>
    </ligand>
</feature>
<feature type="binding site" evidence="1">
    <location>
        <begin position="430"/>
        <end position="432"/>
    </location>
    <ligand>
        <name>L-methionine</name>
        <dbReference type="ChEBI" id="CHEBI:57844"/>
    </ligand>
</feature>
<feature type="binding site" evidence="1">
    <location>
        <position position="483"/>
    </location>
    <ligand>
        <name>L-homocysteine</name>
        <dbReference type="ChEBI" id="CHEBI:58199"/>
    </ligand>
</feature>
<feature type="binding site" evidence="1">
    <location>
        <position position="483"/>
    </location>
    <ligand>
        <name>L-methionine</name>
        <dbReference type="ChEBI" id="CHEBI:57844"/>
    </ligand>
</feature>
<feature type="binding site" evidence="1">
    <location>
        <begin position="514"/>
        <end position="515"/>
    </location>
    <ligand>
        <name>5-methyltetrahydropteroyltri-L-glutamate</name>
        <dbReference type="ChEBI" id="CHEBI:58207"/>
    </ligand>
</feature>
<feature type="binding site" evidence="1">
    <location>
        <position position="560"/>
    </location>
    <ligand>
        <name>5-methyltetrahydropteroyltri-L-glutamate</name>
        <dbReference type="ChEBI" id="CHEBI:58207"/>
    </ligand>
</feature>
<feature type="binding site" evidence="1">
    <location>
        <position position="598"/>
    </location>
    <ligand>
        <name>L-homocysteine</name>
        <dbReference type="ChEBI" id="CHEBI:58199"/>
    </ligand>
</feature>
<feature type="binding site" evidence="1">
    <location>
        <position position="598"/>
    </location>
    <ligand>
        <name>L-methionine</name>
        <dbReference type="ChEBI" id="CHEBI:57844"/>
    </ligand>
</feature>
<feature type="binding site" evidence="1">
    <location>
        <position position="604"/>
    </location>
    <ligand>
        <name>5-methyltetrahydropteroyltri-L-glutamate</name>
        <dbReference type="ChEBI" id="CHEBI:58207"/>
    </ligand>
</feature>
<feature type="binding site" evidence="1">
    <location>
        <position position="641"/>
    </location>
    <ligand>
        <name>Zn(2+)</name>
        <dbReference type="ChEBI" id="CHEBI:29105"/>
        <note>catalytic</note>
    </ligand>
</feature>
<feature type="binding site" evidence="1">
    <location>
        <position position="643"/>
    </location>
    <ligand>
        <name>Zn(2+)</name>
        <dbReference type="ChEBI" id="CHEBI:29105"/>
        <note>catalytic</note>
    </ligand>
</feature>
<feature type="binding site" evidence="1">
    <location>
        <position position="665"/>
    </location>
    <ligand>
        <name>Zn(2+)</name>
        <dbReference type="ChEBI" id="CHEBI:29105"/>
        <note>catalytic</note>
    </ligand>
</feature>
<feature type="binding site" evidence="1">
    <location>
        <position position="726"/>
    </location>
    <ligand>
        <name>Zn(2+)</name>
        <dbReference type="ChEBI" id="CHEBI:29105"/>
        <note>catalytic</note>
    </ligand>
</feature>
<gene>
    <name evidence="1" type="primary">metE</name>
    <name type="ordered locus">Cj1201</name>
</gene>
<sequence length="754" mass="86923">MKNSIISYPRIGANRELKFAIEKYFKNQSSKEELLKSAKDLRIRHWQEIQKAGIDFIPSNDFSLYDNVLDAAVLFNIVHTKYKNLNLDALDEYFAQSRGYQGENGDVTALAMKKWFNTNYHYLVPECDNADIIALTGDKIFKEYLEAKELGIESKPVLIGIFTLFKLIAFKDEKTQKLAKEKLLNAYIELFDKLNELKVTWLELDEPYLVYDLSKEDIALFEEFYQELLNHKKDLKILLQSYFGDLRDIYPKLLESKFDALGLDFIEGKQSLALVQQYGFAKDKILFGGLINGKNIYANDYAKSLKLIKELQKYTQNIILNTSCSLLHVPYSTEFESKLDSSYLKLFAFAKEKLQELKDLKEILNSSEENPLFRANQELFKNIPERLDEKVKARLKALKKEDFTRTPSFKERALIQKEFLKLPLLPTTTIGSFPQSADVRSNRLAFKQEKISAQNYTEFNQQKIKECIQIQEEIGLDVLVHGEFERNDMVEYFGENLKGFLFTQNGWVQSYGTRCVKPPVIWGDVSRTKPITLAWSKFAQSLSQKIVKGMLTGPVTILNWSFPREDISLKESTEQIALAIRDEVLDLENAGIKIIQIDEAALREKLPLRKSDWHSEYLDWAIPAFNLVHSGVKAKTQIHTHMCYSEFSDILKEIDAMDADVISFEASRSNLSLLDTLKAIRFKTEVGPGVYDIHSPRVPSVEELSLTIEKILNKLPKEQIWINPDCGLKTRAYEEVITSLKNLVTATQKIREQL</sequence>
<keyword id="KW-0028">Amino-acid biosynthesis</keyword>
<keyword id="KW-0479">Metal-binding</keyword>
<keyword id="KW-0486">Methionine biosynthesis</keyword>
<keyword id="KW-0489">Methyltransferase</keyword>
<keyword id="KW-1185">Reference proteome</keyword>
<keyword id="KW-0677">Repeat</keyword>
<keyword id="KW-0808">Transferase</keyword>
<keyword id="KW-0862">Zinc</keyword>
<evidence type="ECO:0000255" key="1">
    <source>
        <dbReference type="HAMAP-Rule" id="MF_00172"/>
    </source>
</evidence>
<evidence type="ECO:0000305" key="2"/>
<reference key="1">
    <citation type="journal article" date="2000" name="Nature">
        <title>The genome sequence of the food-borne pathogen Campylobacter jejuni reveals hypervariable sequences.</title>
        <authorList>
            <person name="Parkhill J."/>
            <person name="Wren B.W."/>
            <person name="Mungall K.L."/>
            <person name="Ketley J.M."/>
            <person name="Churcher C.M."/>
            <person name="Basham D."/>
            <person name="Chillingworth T."/>
            <person name="Davies R.M."/>
            <person name="Feltwell T."/>
            <person name="Holroyd S."/>
            <person name="Jagels K."/>
            <person name="Karlyshev A.V."/>
            <person name="Moule S."/>
            <person name="Pallen M.J."/>
            <person name="Penn C.W."/>
            <person name="Quail M.A."/>
            <person name="Rajandream M.A."/>
            <person name="Rutherford K.M."/>
            <person name="van Vliet A.H.M."/>
            <person name="Whitehead S."/>
            <person name="Barrell B.G."/>
        </authorList>
    </citation>
    <scope>NUCLEOTIDE SEQUENCE [LARGE SCALE GENOMIC DNA]</scope>
    <source>
        <strain>ATCC 700819 / NCTC 11168</strain>
    </source>
</reference>
<proteinExistence type="inferred from homology"/>
<accession>Q9PN94</accession>
<accession>Q0P955</accession>
<dbReference type="EC" id="2.1.1.14" evidence="1"/>
<dbReference type="EMBL" id="AL111168">
    <property type="protein sequence ID" value="CAL35316.1"/>
    <property type="molecule type" value="Genomic_DNA"/>
</dbReference>
<dbReference type="PIR" id="C81326">
    <property type="entry name" value="C81326"/>
</dbReference>
<dbReference type="RefSeq" id="WP_002864555.1">
    <property type="nucleotide sequence ID" value="NZ_SZUC01000001.1"/>
</dbReference>
<dbReference type="RefSeq" id="YP_002344592.1">
    <property type="nucleotide sequence ID" value="NC_002163.1"/>
</dbReference>
<dbReference type="SMR" id="Q9PN94"/>
<dbReference type="IntAct" id="Q9PN94">
    <property type="interactions" value="13"/>
</dbReference>
<dbReference type="STRING" id="192222.Cj1201"/>
<dbReference type="PaxDb" id="192222-Cj1201"/>
<dbReference type="DNASU" id="905491"/>
<dbReference type="EnsemblBacteria" id="CAL35316">
    <property type="protein sequence ID" value="CAL35316"/>
    <property type="gene ID" value="Cj1201"/>
</dbReference>
<dbReference type="GeneID" id="905491"/>
<dbReference type="KEGG" id="cje:Cj1201"/>
<dbReference type="PATRIC" id="fig|192222.6.peg.1182"/>
<dbReference type="eggNOG" id="COG0620">
    <property type="taxonomic scope" value="Bacteria"/>
</dbReference>
<dbReference type="HOGENOM" id="CLU_013175_0_0_7"/>
<dbReference type="OrthoDB" id="244285at2"/>
<dbReference type="UniPathway" id="UPA00051">
    <property type="reaction ID" value="UER00082"/>
</dbReference>
<dbReference type="Proteomes" id="UP000000799">
    <property type="component" value="Chromosome"/>
</dbReference>
<dbReference type="GO" id="GO:0003871">
    <property type="term" value="F:5-methyltetrahydropteroyltriglutamate-homocysteine S-methyltransferase activity"/>
    <property type="evidence" value="ECO:0007669"/>
    <property type="project" value="UniProtKB-UniRule"/>
</dbReference>
<dbReference type="GO" id="GO:0008270">
    <property type="term" value="F:zinc ion binding"/>
    <property type="evidence" value="ECO:0007669"/>
    <property type="project" value="InterPro"/>
</dbReference>
<dbReference type="GO" id="GO:0009086">
    <property type="term" value="P:methionine biosynthetic process"/>
    <property type="evidence" value="ECO:0007669"/>
    <property type="project" value="UniProtKB-UniRule"/>
</dbReference>
<dbReference type="GO" id="GO:0032259">
    <property type="term" value="P:methylation"/>
    <property type="evidence" value="ECO:0007669"/>
    <property type="project" value="UniProtKB-KW"/>
</dbReference>
<dbReference type="CDD" id="cd03311">
    <property type="entry name" value="CIMS_C_terminal_like"/>
    <property type="match status" value="1"/>
</dbReference>
<dbReference type="CDD" id="cd03312">
    <property type="entry name" value="CIMS_N_terminal_like"/>
    <property type="match status" value="1"/>
</dbReference>
<dbReference type="Gene3D" id="3.20.20.210">
    <property type="match status" value="2"/>
</dbReference>
<dbReference type="HAMAP" id="MF_00172">
    <property type="entry name" value="Meth_synth"/>
    <property type="match status" value="1"/>
</dbReference>
<dbReference type="InterPro" id="IPR013215">
    <property type="entry name" value="Cbl-indep_Met_Synth_N"/>
</dbReference>
<dbReference type="InterPro" id="IPR006276">
    <property type="entry name" value="Cobalamin-indep_Met_synthase"/>
</dbReference>
<dbReference type="InterPro" id="IPR002629">
    <property type="entry name" value="Met_Synth_C/arc"/>
</dbReference>
<dbReference type="InterPro" id="IPR038071">
    <property type="entry name" value="UROD/MetE-like_sf"/>
</dbReference>
<dbReference type="NCBIfam" id="TIGR01371">
    <property type="entry name" value="met_syn_B12ind"/>
    <property type="match status" value="1"/>
</dbReference>
<dbReference type="NCBIfam" id="NF003556">
    <property type="entry name" value="PRK05222.1"/>
    <property type="match status" value="1"/>
</dbReference>
<dbReference type="PANTHER" id="PTHR30519">
    <property type="entry name" value="5-METHYLTETRAHYDROPTEROYLTRIGLUTAMATE--HOMOCYSTEINE METHYLTRANSFERASE"/>
    <property type="match status" value="1"/>
</dbReference>
<dbReference type="Pfam" id="PF08267">
    <property type="entry name" value="Meth_synt_1"/>
    <property type="match status" value="1"/>
</dbReference>
<dbReference type="Pfam" id="PF01717">
    <property type="entry name" value="Meth_synt_2"/>
    <property type="match status" value="1"/>
</dbReference>
<dbReference type="PIRSF" id="PIRSF000382">
    <property type="entry name" value="MeTrfase_B12_ind"/>
    <property type="match status" value="1"/>
</dbReference>
<dbReference type="SUPFAM" id="SSF51726">
    <property type="entry name" value="UROD/MetE-like"/>
    <property type="match status" value="2"/>
</dbReference>
<organism>
    <name type="scientific">Campylobacter jejuni subsp. jejuni serotype O:2 (strain ATCC 700819 / NCTC 11168)</name>
    <dbReference type="NCBI Taxonomy" id="192222"/>
    <lineage>
        <taxon>Bacteria</taxon>
        <taxon>Pseudomonadati</taxon>
        <taxon>Campylobacterota</taxon>
        <taxon>Epsilonproteobacteria</taxon>
        <taxon>Campylobacterales</taxon>
        <taxon>Campylobacteraceae</taxon>
        <taxon>Campylobacter</taxon>
    </lineage>
</organism>